<organism>
    <name type="scientific">Vibrio cholerae serotype O1 (strain ATCC 39315 / El Tor Inaba N16961)</name>
    <dbReference type="NCBI Taxonomy" id="243277"/>
    <lineage>
        <taxon>Bacteria</taxon>
        <taxon>Pseudomonadati</taxon>
        <taxon>Pseudomonadota</taxon>
        <taxon>Gammaproteobacteria</taxon>
        <taxon>Vibrionales</taxon>
        <taxon>Vibrionaceae</taxon>
        <taxon>Vibrio</taxon>
    </lineage>
</organism>
<feature type="chain" id="PRO_0000190766" description="UPF0758 protein VC_1786">
    <location>
        <begin position="1"/>
        <end position="158"/>
    </location>
</feature>
<feature type="domain" description="MPN" evidence="1">
    <location>
        <begin position="37"/>
        <end position="158"/>
    </location>
</feature>
<feature type="short sequence motif" description="JAMM motif" evidence="1">
    <location>
        <begin position="108"/>
        <end position="121"/>
    </location>
</feature>
<feature type="binding site" evidence="1">
    <location>
        <position position="108"/>
    </location>
    <ligand>
        <name>Zn(2+)</name>
        <dbReference type="ChEBI" id="CHEBI:29105"/>
        <note>catalytic</note>
    </ligand>
</feature>
<feature type="binding site" evidence="1">
    <location>
        <position position="110"/>
    </location>
    <ligand>
        <name>Zn(2+)</name>
        <dbReference type="ChEBI" id="CHEBI:29105"/>
        <note>catalytic</note>
    </ligand>
</feature>
<feature type="binding site" evidence="1">
    <location>
        <position position="121"/>
    </location>
    <ligand>
        <name>Zn(2+)</name>
        <dbReference type="ChEBI" id="CHEBI:29105"/>
        <note>catalytic</note>
    </ligand>
</feature>
<protein>
    <recommendedName>
        <fullName>UPF0758 protein VC_1786</fullName>
    </recommendedName>
</protein>
<gene>
    <name type="ordered locus">VC_1786</name>
</gene>
<evidence type="ECO:0000255" key="1">
    <source>
        <dbReference type="PROSITE-ProRule" id="PRU01182"/>
    </source>
</evidence>
<evidence type="ECO:0000305" key="2"/>
<proteinExistence type="inferred from homology"/>
<name>Y1786_VIBCH</name>
<accession>Q9KR57</accession>
<keyword id="KW-0378">Hydrolase</keyword>
<keyword id="KW-0479">Metal-binding</keyword>
<keyword id="KW-0482">Metalloprotease</keyword>
<keyword id="KW-0645">Protease</keyword>
<keyword id="KW-1185">Reference proteome</keyword>
<keyword id="KW-0862">Zinc</keyword>
<sequence>MTHFPRHRYLLSQRAYEHRVLEEAAEILEQRYVRGETFARTENTTEYLRCKLAGYEHEIFAVLFLDNQHRLIEFKELFRGTVDAASVYPREVLKEALNVNAAAVIFAHNHPSGDPEPSQADRRITQRLKDALSLVDIRVLDHVVVGKSSVSFAERGWL</sequence>
<reference key="1">
    <citation type="journal article" date="2000" name="Nature">
        <title>DNA sequence of both chromosomes of the cholera pathogen Vibrio cholerae.</title>
        <authorList>
            <person name="Heidelberg J.F."/>
            <person name="Eisen J.A."/>
            <person name="Nelson W.C."/>
            <person name="Clayton R.A."/>
            <person name="Gwinn M.L."/>
            <person name="Dodson R.J."/>
            <person name="Haft D.H."/>
            <person name="Hickey E.K."/>
            <person name="Peterson J.D."/>
            <person name="Umayam L.A."/>
            <person name="Gill S.R."/>
            <person name="Nelson K.E."/>
            <person name="Read T.D."/>
            <person name="Tettelin H."/>
            <person name="Richardson D.L."/>
            <person name="Ermolaeva M.D."/>
            <person name="Vamathevan J.J."/>
            <person name="Bass S."/>
            <person name="Qin H."/>
            <person name="Dragoi I."/>
            <person name="Sellers P."/>
            <person name="McDonald L.A."/>
            <person name="Utterback T.R."/>
            <person name="Fleischmann R.D."/>
            <person name="Nierman W.C."/>
            <person name="White O."/>
            <person name="Salzberg S.L."/>
            <person name="Smith H.O."/>
            <person name="Colwell R.R."/>
            <person name="Mekalanos J.J."/>
            <person name="Venter J.C."/>
            <person name="Fraser C.M."/>
        </authorList>
    </citation>
    <scope>NUCLEOTIDE SEQUENCE [LARGE SCALE GENOMIC DNA]</scope>
    <source>
        <strain>ATCC 39315 / El Tor Inaba N16961</strain>
    </source>
</reference>
<comment type="similarity">
    <text evidence="2">Belongs to the UPF0758 family.</text>
</comment>
<dbReference type="EMBL" id="AE003852">
    <property type="protein sequence ID" value="AAF94935.1"/>
    <property type="molecule type" value="Genomic_DNA"/>
</dbReference>
<dbReference type="PIR" id="F82155">
    <property type="entry name" value="F82155"/>
</dbReference>
<dbReference type="RefSeq" id="NP_231421.1">
    <property type="nucleotide sequence ID" value="NC_002505.1"/>
</dbReference>
<dbReference type="SMR" id="Q9KR57"/>
<dbReference type="STRING" id="243277.VC_1786"/>
<dbReference type="DNASU" id="2613666"/>
<dbReference type="EnsemblBacteria" id="AAF94935">
    <property type="protein sequence ID" value="AAF94935"/>
    <property type="gene ID" value="VC_1786"/>
</dbReference>
<dbReference type="KEGG" id="vch:VC_1786"/>
<dbReference type="PATRIC" id="fig|243277.26.peg.1705"/>
<dbReference type="eggNOG" id="COG2003">
    <property type="taxonomic scope" value="Bacteria"/>
</dbReference>
<dbReference type="HOGENOM" id="CLU_073529_3_1_6"/>
<dbReference type="Proteomes" id="UP000000584">
    <property type="component" value="Chromosome 1"/>
</dbReference>
<dbReference type="GO" id="GO:0046872">
    <property type="term" value="F:metal ion binding"/>
    <property type="evidence" value="ECO:0007669"/>
    <property type="project" value="UniProtKB-KW"/>
</dbReference>
<dbReference type="GO" id="GO:0008237">
    <property type="term" value="F:metallopeptidase activity"/>
    <property type="evidence" value="ECO:0007669"/>
    <property type="project" value="UniProtKB-KW"/>
</dbReference>
<dbReference type="GO" id="GO:0006508">
    <property type="term" value="P:proteolysis"/>
    <property type="evidence" value="ECO:0007669"/>
    <property type="project" value="UniProtKB-KW"/>
</dbReference>
<dbReference type="CDD" id="cd08071">
    <property type="entry name" value="MPN_DUF2466"/>
    <property type="match status" value="1"/>
</dbReference>
<dbReference type="Gene3D" id="3.40.140.10">
    <property type="entry name" value="Cytidine Deaminase, domain 2"/>
    <property type="match status" value="1"/>
</dbReference>
<dbReference type="InterPro" id="IPR037518">
    <property type="entry name" value="MPN"/>
</dbReference>
<dbReference type="InterPro" id="IPR025657">
    <property type="entry name" value="RadC_JAB"/>
</dbReference>
<dbReference type="InterPro" id="IPR001405">
    <property type="entry name" value="UPF0758"/>
</dbReference>
<dbReference type="InterPro" id="IPR020891">
    <property type="entry name" value="UPF0758_CS"/>
</dbReference>
<dbReference type="NCBIfam" id="TIGR00608">
    <property type="entry name" value="radc"/>
    <property type="match status" value="1"/>
</dbReference>
<dbReference type="PANTHER" id="PTHR30471">
    <property type="entry name" value="DNA REPAIR PROTEIN RADC"/>
    <property type="match status" value="1"/>
</dbReference>
<dbReference type="PANTHER" id="PTHR30471:SF6">
    <property type="entry name" value="UPF0758 PROTEIN VC_0510"/>
    <property type="match status" value="1"/>
</dbReference>
<dbReference type="Pfam" id="PF04002">
    <property type="entry name" value="RadC"/>
    <property type="match status" value="1"/>
</dbReference>
<dbReference type="SUPFAM" id="SSF102712">
    <property type="entry name" value="JAB1/MPN domain"/>
    <property type="match status" value="1"/>
</dbReference>
<dbReference type="PROSITE" id="PS50249">
    <property type="entry name" value="MPN"/>
    <property type="match status" value="1"/>
</dbReference>
<dbReference type="PROSITE" id="PS01302">
    <property type="entry name" value="UPF0758"/>
    <property type="match status" value="1"/>
</dbReference>